<comment type="similarity">
    <text evidence="1">Belongs to the bacterial ribosomal protein bS21 family.</text>
</comment>
<reference key="1">
    <citation type="submission" date="2007-09" db="EMBL/GenBank/DDBJ databases">
        <title>Complete genome sequence of Rickettsia rickettsii.</title>
        <authorList>
            <person name="Madan A."/>
            <person name="Fahey J."/>
            <person name="Helton E."/>
            <person name="Ketteman M."/>
            <person name="Madan A."/>
            <person name="Rodrigues S."/>
            <person name="Sanchez A."/>
            <person name="Dasch G."/>
            <person name="Eremeeva M."/>
        </authorList>
    </citation>
    <scope>NUCLEOTIDE SEQUENCE [LARGE SCALE GENOMIC DNA]</scope>
    <source>
        <strain>Sheila Smith</strain>
    </source>
</reference>
<organism>
    <name type="scientific">Rickettsia rickettsii (strain Sheila Smith)</name>
    <dbReference type="NCBI Taxonomy" id="392021"/>
    <lineage>
        <taxon>Bacteria</taxon>
        <taxon>Pseudomonadati</taxon>
        <taxon>Pseudomonadota</taxon>
        <taxon>Alphaproteobacteria</taxon>
        <taxon>Rickettsiales</taxon>
        <taxon>Rickettsiaceae</taxon>
        <taxon>Rickettsieae</taxon>
        <taxon>Rickettsia</taxon>
        <taxon>spotted fever group</taxon>
    </lineage>
</organism>
<accession>A8GT12</accession>
<name>RS21_RICRS</name>
<evidence type="ECO:0000255" key="1">
    <source>
        <dbReference type="HAMAP-Rule" id="MF_00358"/>
    </source>
</evidence>
<evidence type="ECO:0000305" key="2"/>
<feature type="chain" id="PRO_1000005166" description="Small ribosomal subunit protein bS21">
    <location>
        <begin position="1"/>
        <end position="66"/>
    </location>
</feature>
<proteinExistence type="inferred from homology"/>
<gene>
    <name evidence="1" type="primary">rpsU</name>
    <name type="ordered locus">A1G_05220</name>
</gene>
<keyword id="KW-0687">Ribonucleoprotein</keyword>
<keyword id="KW-0689">Ribosomal protein</keyword>
<sequence length="66" mass="8124">MILVNVHAGNCDNTLKNFKKKLQRELYFRKMKEQRYYETPSAKRVRKAQEAARRQRKFARKKMFDE</sequence>
<protein>
    <recommendedName>
        <fullName evidence="1">Small ribosomal subunit protein bS21</fullName>
    </recommendedName>
    <alternativeName>
        <fullName evidence="2">30S ribosomal protein S21</fullName>
    </alternativeName>
</protein>
<dbReference type="EMBL" id="CP000848">
    <property type="protein sequence ID" value="ABV76537.1"/>
    <property type="molecule type" value="Genomic_DNA"/>
</dbReference>
<dbReference type="RefSeq" id="WP_012148483.1">
    <property type="nucleotide sequence ID" value="NC_009882.1"/>
</dbReference>
<dbReference type="SMR" id="A8GT12"/>
<dbReference type="GeneID" id="34514902"/>
<dbReference type="GeneID" id="79937617"/>
<dbReference type="KEGG" id="rri:A1G_05220"/>
<dbReference type="HOGENOM" id="CLU_159258_0_2_5"/>
<dbReference type="Proteomes" id="UP000006832">
    <property type="component" value="Chromosome"/>
</dbReference>
<dbReference type="GO" id="GO:1990904">
    <property type="term" value="C:ribonucleoprotein complex"/>
    <property type="evidence" value="ECO:0007669"/>
    <property type="project" value="UniProtKB-KW"/>
</dbReference>
<dbReference type="GO" id="GO:0005840">
    <property type="term" value="C:ribosome"/>
    <property type="evidence" value="ECO:0007669"/>
    <property type="project" value="UniProtKB-KW"/>
</dbReference>
<dbReference type="GO" id="GO:0003735">
    <property type="term" value="F:structural constituent of ribosome"/>
    <property type="evidence" value="ECO:0007669"/>
    <property type="project" value="InterPro"/>
</dbReference>
<dbReference type="GO" id="GO:0006412">
    <property type="term" value="P:translation"/>
    <property type="evidence" value="ECO:0007669"/>
    <property type="project" value="UniProtKB-UniRule"/>
</dbReference>
<dbReference type="Gene3D" id="1.20.5.1150">
    <property type="entry name" value="Ribosomal protein S8"/>
    <property type="match status" value="1"/>
</dbReference>
<dbReference type="HAMAP" id="MF_00358">
    <property type="entry name" value="Ribosomal_bS21"/>
    <property type="match status" value="1"/>
</dbReference>
<dbReference type="InterPro" id="IPR001911">
    <property type="entry name" value="Ribosomal_bS21"/>
</dbReference>
<dbReference type="InterPro" id="IPR038380">
    <property type="entry name" value="Ribosomal_bS21_sf"/>
</dbReference>
<dbReference type="NCBIfam" id="TIGR00030">
    <property type="entry name" value="S21p"/>
    <property type="match status" value="1"/>
</dbReference>
<dbReference type="Pfam" id="PF01165">
    <property type="entry name" value="Ribosomal_S21"/>
    <property type="match status" value="1"/>
</dbReference>